<protein>
    <recommendedName>
        <fullName evidence="1">Small ribosomal subunit protein uS10</fullName>
    </recommendedName>
    <alternativeName>
        <fullName evidence="2">30S ribosomal protein S10</fullName>
    </alternativeName>
</protein>
<name>RS10_CLOPE</name>
<sequence length="102" mass="11510">MSKQKIRIRLKAFDHTILDQSAEKIVETAKSTGAKVVGPVPLPTEKDVITILRAVHKYKDSREQFEVRTHKRLIDIVNPSPKTVDALMRLNLPAGVDIEIKL</sequence>
<feature type="chain" id="PRO_0000146522" description="Small ribosomal subunit protein uS10">
    <location>
        <begin position="1"/>
        <end position="102"/>
    </location>
</feature>
<comment type="function">
    <text evidence="1">Involved in the binding of tRNA to the ribosomes.</text>
</comment>
<comment type="subunit">
    <text evidence="1">Part of the 30S ribosomal subunit.</text>
</comment>
<comment type="similarity">
    <text evidence="1">Belongs to the universal ribosomal protein uS10 family.</text>
</comment>
<gene>
    <name evidence="1" type="primary">rpsJ</name>
    <name type="ordered locus">CPE2406</name>
</gene>
<reference key="1">
    <citation type="journal article" date="2002" name="Proc. Natl. Acad. Sci. U.S.A.">
        <title>Complete genome sequence of Clostridium perfringens, an anaerobic flesh-eater.</title>
        <authorList>
            <person name="Shimizu T."/>
            <person name="Ohtani K."/>
            <person name="Hirakawa H."/>
            <person name="Ohshima K."/>
            <person name="Yamashita A."/>
            <person name="Shiba T."/>
            <person name="Ogasawara N."/>
            <person name="Hattori M."/>
            <person name="Kuhara S."/>
            <person name="Hayashi H."/>
        </authorList>
    </citation>
    <scope>NUCLEOTIDE SEQUENCE [LARGE SCALE GENOMIC DNA]</scope>
    <source>
        <strain>13 / Type A</strain>
    </source>
</reference>
<accession>Q8XHS2</accession>
<proteinExistence type="inferred from homology"/>
<evidence type="ECO:0000255" key="1">
    <source>
        <dbReference type="HAMAP-Rule" id="MF_00508"/>
    </source>
</evidence>
<evidence type="ECO:0000305" key="2"/>
<keyword id="KW-1185">Reference proteome</keyword>
<keyword id="KW-0687">Ribonucleoprotein</keyword>
<keyword id="KW-0689">Ribosomal protein</keyword>
<dbReference type="EMBL" id="BA000016">
    <property type="protein sequence ID" value="BAB82112.1"/>
    <property type="molecule type" value="Genomic_DNA"/>
</dbReference>
<dbReference type="RefSeq" id="WP_003479233.1">
    <property type="nucleotide sequence ID" value="NC_003366.1"/>
</dbReference>
<dbReference type="SMR" id="Q8XHS2"/>
<dbReference type="STRING" id="195102.gene:10491723"/>
<dbReference type="GeneID" id="93001008"/>
<dbReference type="KEGG" id="cpe:CPE2406"/>
<dbReference type="HOGENOM" id="CLU_122625_1_3_9"/>
<dbReference type="Proteomes" id="UP000000818">
    <property type="component" value="Chromosome"/>
</dbReference>
<dbReference type="GO" id="GO:1990904">
    <property type="term" value="C:ribonucleoprotein complex"/>
    <property type="evidence" value="ECO:0007669"/>
    <property type="project" value="UniProtKB-KW"/>
</dbReference>
<dbReference type="GO" id="GO:0005840">
    <property type="term" value="C:ribosome"/>
    <property type="evidence" value="ECO:0007669"/>
    <property type="project" value="UniProtKB-KW"/>
</dbReference>
<dbReference type="GO" id="GO:0003735">
    <property type="term" value="F:structural constituent of ribosome"/>
    <property type="evidence" value="ECO:0007669"/>
    <property type="project" value="InterPro"/>
</dbReference>
<dbReference type="GO" id="GO:0000049">
    <property type="term" value="F:tRNA binding"/>
    <property type="evidence" value="ECO:0007669"/>
    <property type="project" value="UniProtKB-UniRule"/>
</dbReference>
<dbReference type="GO" id="GO:0006412">
    <property type="term" value="P:translation"/>
    <property type="evidence" value="ECO:0007669"/>
    <property type="project" value="UniProtKB-UniRule"/>
</dbReference>
<dbReference type="FunFam" id="3.30.70.600:FF:000001">
    <property type="entry name" value="30S ribosomal protein S10"/>
    <property type="match status" value="1"/>
</dbReference>
<dbReference type="Gene3D" id="3.30.70.600">
    <property type="entry name" value="Ribosomal protein S10 domain"/>
    <property type="match status" value="1"/>
</dbReference>
<dbReference type="HAMAP" id="MF_00508">
    <property type="entry name" value="Ribosomal_uS10"/>
    <property type="match status" value="1"/>
</dbReference>
<dbReference type="InterPro" id="IPR001848">
    <property type="entry name" value="Ribosomal_uS10"/>
</dbReference>
<dbReference type="InterPro" id="IPR018268">
    <property type="entry name" value="Ribosomal_uS10_CS"/>
</dbReference>
<dbReference type="InterPro" id="IPR027486">
    <property type="entry name" value="Ribosomal_uS10_dom"/>
</dbReference>
<dbReference type="InterPro" id="IPR036838">
    <property type="entry name" value="Ribosomal_uS10_dom_sf"/>
</dbReference>
<dbReference type="NCBIfam" id="NF001861">
    <property type="entry name" value="PRK00596.1"/>
    <property type="match status" value="1"/>
</dbReference>
<dbReference type="NCBIfam" id="TIGR01049">
    <property type="entry name" value="rpsJ_bact"/>
    <property type="match status" value="1"/>
</dbReference>
<dbReference type="PANTHER" id="PTHR11700">
    <property type="entry name" value="30S RIBOSOMAL PROTEIN S10 FAMILY MEMBER"/>
    <property type="match status" value="1"/>
</dbReference>
<dbReference type="Pfam" id="PF00338">
    <property type="entry name" value="Ribosomal_S10"/>
    <property type="match status" value="1"/>
</dbReference>
<dbReference type="PRINTS" id="PR00971">
    <property type="entry name" value="RIBOSOMALS10"/>
</dbReference>
<dbReference type="SMART" id="SM01403">
    <property type="entry name" value="Ribosomal_S10"/>
    <property type="match status" value="1"/>
</dbReference>
<dbReference type="SUPFAM" id="SSF54999">
    <property type="entry name" value="Ribosomal protein S10"/>
    <property type="match status" value="1"/>
</dbReference>
<dbReference type="PROSITE" id="PS00361">
    <property type="entry name" value="RIBOSOMAL_S10"/>
    <property type="match status" value="1"/>
</dbReference>
<organism>
    <name type="scientific">Clostridium perfringens (strain 13 / Type A)</name>
    <dbReference type="NCBI Taxonomy" id="195102"/>
    <lineage>
        <taxon>Bacteria</taxon>
        <taxon>Bacillati</taxon>
        <taxon>Bacillota</taxon>
        <taxon>Clostridia</taxon>
        <taxon>Eubacteriales</taxon>
        <taxon>Clostridiaceae</taxon>
        <taxon>Clostridium</taxon>
    </lineage>
</organism>